<feature type="chain" id="PRO_0000197140" description="Mis18-binding protein 1">
    <location>
        <begin position="1"/>
        <end position="1132"/>
    </location>
</feature>
<feature type="domain" description="SANTA">
    <location>
        <begin position="383"/>
        <end position="469"/>
    </location>
</feature>
<feature type="domain" description="SANT" evidence="2">
    <location>
        <begin position="875"/>
        <end position="930"/>
    </location>
</feature>
<feature type="region of interest" description="Disordered" evidence="3">
    <location>
        <begin position="123"/>
        <end position="154"/>
    </location>
</feature>
<feature type="region of interest" description="Disordered" evidence="3">
    <location>
        <begin position="306"/>
        <end position="332"/>
    </location>
</feature>
<feature type="region of interest" description="Disordered" evidence="3">
    <location>
        <begin position="482"/>
        <end position="518"/>
    </location>
</feature>
<feature type="region of interest" description="Disordered" evidence="3">
    <location>
        <begin position="765"/>
        <end position="798"/>
    </location>
</feature>
<feature type="region of interest" description="Disordered" evidence="3">
    <location>
        <begin position="923"/>
        <end position="957"/>
    </location>
</feature>
<feature type="compositionally biased region" description="Polar residues" evidence="3">
    <location>
        <begin position="130"/>
        <end position="150"/>
    </location>
</feature>
<feature type="compositionally biased region" description="Basic and acidic residues" evidence="3">
    <location>
        <begin position="497"/>
        <end position="513"/>
    </location>
</feature>
<feature type="compositionally biased region" description="Basic and acidic residues" evidence="3">
    <location>
        <begin position="779"/>
        <end position="790"/>
    </location>
</feature>
<feature type="compositionally biased region" description="Basic residues" evidence="3">
    <location>
        <begin position="930"/>
        <end position="941"/>
    </location>
</feature>
<feature type="modified residue" description="Phosphoserine" evidence="15">
    <location>
        <position position="9"/>
    </location>
</feature>
<feature type="modified residue" description="Phosphoserine" evidence="11">
    <location>
        <position position="110"/>
    </location>
</feature>
<feature type="modified residue" description="Phosphoserine" evidence="15">
    <location>
        <position position="131"/>
    </location>
</feature>
<feature type="modified residue" description="Phosphoserine" evidence="14 15">
    <location>
        <position position="135"/>
    </location>
</feature>
<feature type="modified residue" description="Phosphoserine" evidence="14">
    <location>
        <position position="172"/>
    </location>
</feature>
<feature type="modified residue" description="Phosphoserine" evidence="15">
    <location>
        <position position="192"/>
    </location>
</feature>
<feature type="modified residue" description="Phosphoserine" evidence="14 15">
    <location>
        <position position="299"/>
    </location>
</feature>
<feature type="modified residue" description="Phosphoserine" evidence="15">
    <location>
        <position position="365"/>
    </location>
</feature>
<feature type="modified residue" description="Phosphothreonine" evidence="11 13 14 15">
    <location>
        <position position="653"/>
    </location>
</feature>
<feature type="modified residue" description="Phosphoserine" evidence="14">
    <location>
        <position position="772"/>
    </location>
</feature>
<feature type="modified residue" description="Phosphoserine" evidence="14">
    <location>
        <position position="773"/>
    </location>
</feature>
<feature type="modified residue" description="Phosphothreonine" evidence="11">
    <location>
        <position position="821"/>
    </location>
</feature>
<feature type="modified residue" description="Phosphoserine" evidence="11">
    <location>
        <position position="824"/>
    </location>
</feature>
<feature type="modified residue" description="Phosphoserine" evidence="13 15">
    <location>
        <position position="860"/>
    </location>
</feature>
<feature type="modified residue" description="Phosphoserine" evidence="11 12 13 14">
    <location>
        <position position="1008"/>
    </location>
</feature>
<feature type="modified residue" description="Phosphoserine" evidence="11">
    <location>
        <position position="1086"/>
    </location>
</feature>
<feature type="modified residue" description="Phosphothreonine" evidence="11">
    <location>
        <position position="1087"/>
    </location>
</feature>
<feature type="modified residue" description="Phosphothreonine" evidence="11">
    <location>
        <position position="1089"/>
    </location>
</feature>
<feature type="modified residue" description="Phosphoserine" evidence="11 12 13 14 15">
    <location>
        <position position="1104"/>
    </location>
</feature>
<feature type="modified residue" description="Phosphoserine" evidence="13 14 15">
    <location>
        <position position="1116"/>
    </location>
</feature>
<feature type="cross-link" description="Glycyl lysine isopeptide (Lys-Gly) (interchain with G-Cter in SUMO2)" evidence="17">
    <location>
        <position position="7"/>
    </location>
</feature>
<feature type="cross-link" description="Glycyl lysine isopeptide (Lys-Gly) (interchain with G-Cter in SUMO2)" evidence="17">
    <location>
        <position position="65"/>
    </location>
</feature>
<feature type="cross-link" description="Glycyl lysine isopeptide (Lys-Gly) (interchain with G-Cter in SUMO2)" evidence="17">
    <location>
        <position position="211"/>
    </location>
</feature>
<feature type="cross-link" description="Glycyl lysine isopeptide (Lys-Gly) (interchain with G-Cter in SUMO2)" evidence="17">
    <location>
        <position position="262"/>
    </location>
</feature>
<feature type="cross-link" description="Glycyl lysine isopeptide (Lys-Gly) (interchain with G-Cter in SUMO2)" evidence="17">
    <location>
        <position position="534"/>
    </location>
</feature>
<feature type="cross-link" description="Glycyl lysine isopeptide (Lys-Gly) (interchain with G-Cter in SUMO2)" evidence="17">
    <location>
        <position position="612"/>
    </location>
</feature>
<feature type="cross-link" description="Glycyl lysine isopeptide (Lys-Gly) (interchain with G-Cter in SUMO2)" evidence="16 17">
    <location>
        <position position="639"/>
    </location>
</feature>
<feature type="cross-link" description="Glycyl lysine isopeptide (Lys-Gly) (interchain with G-Cter in SUMO2)" evidence="17">
    <location>
        <position position="647"/>
    </location>
</feature>
<feature type="cross-link" description="Glycyl lysine isopeptide (Lys-Gly) (interchain with G-Cter in SUMO2)" evidence="17">
    <location>
        <position position="727"/>
    </location>
</feature>
<feature type="cross-link" description="Glycyl lysine isopeptide (Lys-Gly) (interchain with G-Cter in SUMO2)" evidence="16 17">
    <location>
        <position position="742"/>
    </location>
</feature>
<feature type="cross-link" description="Glycyl lysine isopeptide (Lys-Gly) (interchain with G-Cter in SUMO2)" evidence="17">
    <location>
        <position position="840"/>
    </location>
</feature>
<feature type="cross-link" description="Glycyl lysine isopeptide (Lys-Gly) (interchain with G-Cter in SUMO2)" evidence="16 17">
    <location>
        <position position="899"/>
    </location>
</feature>
<feature type="cross-link" description="Glycyl lysine isopeptide (Lys-Gly) (interchain with G-Cter in SUMO2)" evidence="17">
    <location>
        <position position="956"/>
    </location>
</feature>
<feature type="cross-link" description="Glycyl lysine isopeptide (Lys-Gly) (interchain with G-Cter in SUMO2)" evidence="17">
    <location>
        <position position="964"/>
    </location>
</feature>
<feature type="cross-link" description="Glycyl lysine isopeptide (Lys-Gly) (interchain with G-Cter in SUMO2)" evidence="17">
    <location>
        <position position="983"/>
    </location>
</feature>
<feature type="cross-link" description="Glycyl lysine isopeptide (Lys-Gly) (interchain with G-Cter in SUMO2)" evidence="17">
    <location>
        <position position="1079"/>
    </location>
</feature>
<feature type="splice variant" id="VSP_014105" description="In isoform 2." evidence="8">
    <location>
        <begin position="391"/>
        <end position="1132"/>
    </location>
</feature>
<feature type="sequence variant" id="VAR_050184" description="In dbSNP:rs1269008.">
    <original>C</original>
    <variation>R</variation>
    <location>
        <position position="164"/>
    </location>
</feature>
<feature type="sequence variant" id="VAR_050185" description="In dbSNP:rs34168608.">
    <original>P</original>
    <variation>R</variation>
    <location>
        <position position="347"/>
    </location>
</feature>
<feature type="sequence variant" id="VAR_050186" description="In dbSNP:rs34101857.">
    <original>E</original>
    <variation>D</variation>
    <location>
        <position position="583"/>
    </location>
</feature>
<feature type="sequence variant" id="VAR_050187" description="In dbSNP:rs34402741.">
    <original>E</original>
    <variation>Q</variation>
    <location>
        <position position="851"/>
    </location>
</feature>
<feature type="sequence conflict" description="In Ref. 1; BAB67796." evidence="10" ref="1">
    <original>R</original>
    <variation>Q</variation>
    <location>
        <position position="510"/>
    </location>
</feature>
<feature type="strand" evidence="19">
    <location>
        <begin position="75"/>
        <end position="77"/>
    </location>
</feature>
<feature type="helix" evidence="18">
    <location>
        <begin position="882"/>
        <end position="894"/>
    </location>
</feature>
<feature type="strand" evidence="18">
    <location>
        <begin position="897"/>
        <end position="901"/>
    </location>
</feature>
<feature type="helix" evidence="18">
    <location>
        <begin position="902"/>
        <end position="909"/>
    </location>
</feature>
<feature type="turn" evidence="18">
    <location>
        <begin position="910"/>
        <end position="912"/>
    </location>
</feature>
<feature type="helix" evidence="18">
    <location>
        <begin position="915"/>
        <end position="924"/>
    </location>
</feature>
<feature type="strand" evidence="18">
    <location>
        <begin position="925"/>
        <end position="929"/>
    </location>
</feature>
<feature type="strand" evidence="18">
    <location>
        <begin position="934"/>
        <end position="936"/>
    </location>
</feature>
<dbReference type="EMBL" id="AB067490">
    <property type="protein sequence ID" value="BAB67796.1"/>
    <property type="status" value="ALT_FRAME"/>
    <property type="molecule type" value="mRNA"/>
</dbReference>
<dbReference type="EMBL" id="AK002048">
    <property type="status" value="NOT_ANNOTATED_CDS"/>
    <property type="molecule type" value="mRNA"/>
</dbReference>
<dbReference type="EMBL" id="AL121809">
    <property type="status" value="NOT_ANNOTATED_CDS"/>
    <property type="molecule type" value="Genomic_DNA"/>
</dbReference>
<dbReference type="EMBL" id="CH471078">
    <property type="protein sequence ID" value="EAW65778.1"/>
    <property type="molecule type" value="Genomic_DNA"/>
</dbReference>
<dbReference type="EMBL" id="CH471078">
    <property type="protein sequence ID" value="EAW65779.1"/>
    <property type="molecule type" value="Genomic_DNA"/>
</dbReference>
<dbReference type="EMBL" id="CH471078">
    <property type="protein sequence ID" value="EAW65780.1"/>
    <property type="molecule type" value="Genomic_DNA"/>
</dbReference>
<dbReference type="EMBL" id="BC051885">
    <property type="protein sequence ID" value="AAH51885.1"/>
    <property type="molecule type" value="mRNA"/>
</dbReference>
<dbReference type="EMBL" id="BC065544">
    <property type="protein sequence ID" value="AAH65544.1"/>
    <property type="molecule type" value="mRNA"/>
</dbReference>
<dbReference type="EMBL" id="AJ242977">
    <property type="protein sequence ID" value="CAB45134.1"/>
    <property type="molecule type" value="mRNA"/>
</dbReference>
<dbReference type="CCDS" id="CCDS9684.1">
    <molecule id="Q6P0N0-1"/>
</dbReference>
<dbReference type="RefSeq" id="NP_060823.3">
    <molecule id="Q6P0N0-1"/>
    <property type="nucleotide sequence ID" value="NM_018353.4"/>
</dbReference>
<dbReference type="RefSeq" id="XP_005267890.1">
    <molecule id="Q6P0N0-1"/>
    <property type="nucleotide sequence ID" value="XM_005267833.6"/>
</dbReference>
<dbReference type="RefSeq" id="XP_016876914.1">
    <molecule id="Q6P0N0-1"/>
    <property type="nucleotide sequence ID" value="XM_017021425.2"/>
</dbReference>
<dbReference type="RefSeq" id="XP_047287501.1">
    <molecule id="Q6P0N0-1"/>
    <property type="nucleotide sequence ID" value="XM_047431545.1"/>
</dbReference>
<dbReference type="RefSeq" id="XP_047287502.1">
    <molecule id="Q6P0N0-1"/>
    <property type="nucleotide sequence ID" value="XM_047431546.1"/>
</dbReference>
<dbReference type="RefSeq" id="XP_054232295.1">
    <molecule id="Q6P0N0-1"/>
    <property type="nucleotide sequence ID" value="XM_054376320.1"/>
</dbReference>
<dbReference type="RefSeq" id="XP_054232296.1">
    <molecule id="Q6P0N0-1"/>
    <property type="nucleotide sequence ID" value="XM_054376321.1"/>
</dbReference>
<dbReference type="RefSeq" id="XP_054232297.1">
    <molecule id="Q6P0N0-1"/>
    <property type="nucleotide sequence ID" value="XM_054376322.1"/>
</dbReference>
<dbReference type="RefSeq" id="XP_054232298.1">
    <molecule id="Q6P0N0-1"/>
    <property type="nucleotide sequence ID" value="XM_054376323.1"/>
</dbReference>
<dbReference type="PDB" id="1WGX">
    <property type="method" value="NMR"/>
    <property type="chains" value="A=877-936"/>
</dbReference>
<dbReference type="PDB" id="8S31">
    <property type="method" value="X-ray"/>
    <property type="resolution" value="2.13 A"/>
    <property type="chains" value="C/D=72-82"/>
</dbReference>
<dbReference type="PDBsum" id="1WGX"/>
<dbReference type="PDBsum" id="8S31"/>
<dbReference type="EMDB" id="EMD-50218"/>
<dbReference type="EMDB" id="EMD-50219"/>
<dbReference type="EMDB" id="EMD-50220"/>
<dbReference type="SMR" id="Q6P0N0"/>
<dbReference type="BioGRID" id="120601">
    <property type="interactions" value="63"/>
</dbReference>
<dbReference type="ComplexPortal" id="CPX-3272">
    <property type="entry name" value="Mis18 complex"/>
</dbReference>
<dbReference type="CORUM" id="Q6P0N0"/>
<dbReference type="FunCoup" id="Q6P0N0">
    <property type="interactions" value="1834"/>
</dbReference>
<dbReference type="IntAct" id="Q6P0N0">
    <property type="interactions" value="36"/>
</dbReference>
<dbReference type="MINT" id="Q6P0N0"/>
<dbReference type="STRING" id="9606.ENSP00000309790"/>
<dbReference type="GlyGen" id="Q6P0N0">
    <property type="glycosylation" value="1 site, 1 O-linked glycan (1 site)"/>
</dbReference>
<dbReference type="iPTMnet" id="Q6P0N0"/>
<dbReference type="PhosphoSitePlus" id="Q6P0N0"/>
<dbReference type="BioMuta" id="MIS18BP1"/>
<dbReference type="DMDM" id="68052324"/>
<dbReference type="jPOST" id="Q6P0N0"/>
<dbReference type="MassIVE" id="Q6P0N0"/>
<dbReference type="PaxDb" id="9606-ENSP00000309790"/>
<dbReference type="PeptideAtlas" id="Q6P0N0"/>
<dbReference type="ProteomicsDB" id="66813">
    <molecule id="Q6P0N0-1"/>
</dbReference>
<dbReference type="ProteomicsDB" id="66814">
    <molecule id="Q6P0N0-2"/>
</dbReference>
<dbReference type="Pumba" id="Q6P0N0"/>
<dbReference type="Antibodypedia" id="12">
    <property type="antibodies" value="55 antibodies from 13 providers"/>
</dbReference>
<dbReference type="DNASU" id="55320"/>
<dbReference type="Ensembl" id="ENST00000310806.9">
    <molecule id="Q6P0N0-1"/>
    <property type="protein sequence ID" value="ENSP00000309790.4"/>
    <property type="gene ID" value="ENSG00000129534.14"/>
</dbReference>
<dbReference type="GeneID" id="55320"/>
<dbReference type="KEGG" id="hsa:55320"/>
<dbReference type="MANE-Select" id="ENST00000310806.9">
    <property type="protein sequence ID" value="ENSP00000309790.4"/>
    <property type="RefSeq nucleotide sequence ID" value="NM_018353.5"/>
    <property type="RefSeq protein sequence ID" value="NP_060823.3"/>
</dbReference>
<dbReference type="UCSC" id="uc001wwf.3">
    <molecule id="Q6P0N0-1"/>
    <property type="organism name" value="human"/>
</dbReference>
<dbReference type="AGR" id="HGNC:20190"/>
<dbReference type="CTD" id="55320"/>
<dbReference type="DisGeNET" id="55320"/>
<dbReference type="GeneCards" id="MIS18BP1"/>
<dbReference type="HGNC" id="HGNC:20190">
    <property type="gene designation" value="MIS18BP1"/>
</dbReference>
<dbReference type="HPA" id="ENSG00000129534">
    <property type="expression patterns" value="Tissue enhanced (bone)"/>
</dbReference>
<dbReference type="MIM" id="618139">
    <property type="type" value="gene"/>
</dbReference>
<dbReference type="neXtProt" id="NX_Q6P0N0"/>
<dbReference type="OpenTargets" id="ENSG00000129534"/>
<dbReference type="PharmGKB" id="PA134927557"/>
<dbReference type="VEuPathDB" id="HostDB:ENSG00000129534"/>
<dbReference type="eggNOG" id="ENOG502QRUS">
    <property type="taxonomic scope" value="Eukaryota"/>
</dbReference>
<dbReference type="GeneTree" id="ENSGT00390000007395"/>
<dbReference type="HOGENOM" id="CLU_009019_1_0_1"/>
<dbReference type="InParanoid" id="Q6P0N0"/>
<dbReference type="OMA" id="HSNCQNK"/>
<dbReference type="OrthoDB" id="118550at2759"/>
<dbReference type="PAN-GO" id="Q6P0N0">
    <property type="GO annotations" value="0 GO annotations based on evolutionary models"/>
</dbReference>
<dbReference type="PhylomeDB" id="Q6P0N0"/>
<dbReference type="TreeFam" id="TF106401"/>
<dbReference type="PathwayCommons" id="Q6P0N0"/>
<dbReference type="Reactome" id="R-HSA-606279">
    <property type="pathway name" value="Deposition of new CENPA-containing nucleosomes at the centromere"/>
</dbReference>
<dbReference type="SignaLink" id="Q6P0N0"/>
<dbReference type="BioGRID-ORCS" id="55320">
    <property type="hits" value="594 hits in 1164 CRISPR screens"/>
</dbReference>
<dbReference type="ChiTaRS" id="MIS18BP1">
    <property type="organism name" value="human"/>
</dbReference>
<dbReference type="EvolutionaryTrace" id="Q6P0N0"/>
<dbReference type="GeneWiki" id="C14orf106"/>
<dbReference type="GenomeRNAi" id="55320"/>
<dbReference type="Pharos" id="Q6P0N0">
    <property type="development level" value="Tbio"/>
</dbReference>
<dbReference type="PRO" id="PR:Q6P0N0"/>
<dbReference type="Proteomes" id="UP000005640">
    <property type="component" value="Chromosome 14"/>
</dbReference>
<dbReference type="RNAct" id="Q6P0N0">
    <property type="molecule type" value="protein"/>
</dbReference>
<dbReference type="Bgee" id="ENSG00000129534">
    <property type="expression patterns" value="Expressed in monocyte and 156 other cell types or tissues"/>
</dbReference>
<dbReference type="ExpressionAtlas" id="Q6P0N0">
    <property type="expression patterns" value="baseline and differential"/>
</dbReference>
<dbReference type="GO" id="GO:0000775">
    <property type="term" value="C:chromosome, centromeric region"/>
    <property type="evidence" value="ECO:0000318"/>
    <property type="project" value="GO_Central"/>
</dbReference>
<dbReference type="GO" id="GO:0005654">
    <property type="term" value="C:nucleoplasm"/>
    <property type="evidence" value="ECO:0000304"/>
    <property type="project" value="Reactome"/>
</dbReference>
<dbReference type="GO" id="GO:0003677">
    <property type="term" value="F:DNA binding"/>
    <property type="evidence" value="ECO:0007669"/>
    <property type="project" value="UniProtKB-KW"/>
</dbReference>
<dbReference type="GO" id="GO:0051301">
    <property type="term" value="P:cell division"/>
    <property type="evidence" value="ECO:0007669"/>
    <property type="project" value="UniProtKB-KW"/>
</dbReference>
<dbReference type="CDD" id="cd00167">
    <property type="entry name" value="SANT"/>
    <property type="match status" value="1"/>
</dbReference>
<dbReference type="FunFam" id="1.10.10.60:FF:000273">
    <property type="entry name" value="MIS18 binding protein 1"/>
    <property type="match status" value="1"/>
</dbReference>
<dbReference type="Gene3D" id="1.10.10.60">
    <property type="entry name" value="Homeodomain-like"/>
    <property type="match status" value="1"/>
</dbReference>
<dbReference type="InterPro" id="IPR009057">
    <property type="entry name" value="Homeodomain-like_sf"/>
</dbReference>
<dbReference type="InterPro" id="IPR039110">
    <property type="entry name" value="KNL2-like"/>
</dbReference>
<dbReference type="InterPro" id="IPR001005">
    <property type="entry name" value="SANT/Myb"/>
</dbReference>
<dbReference type="InterPro" id="IPR017884">
    <property type="entry name" value="SANT_dom"/>
</dbReference>
<dbReference type="InterPro" id="IPR015216">
    <property type="entry name" value="SANTA"/>
</dbReference>
<dbReference type="PANTHER" id="PTHR16124">
    <property type="entry name" value="MIS18-BINDING PROTEIN 1"/>
    <property type="match status" value="1"/>
</dbReference>
<dbReference type="PANTHER" id="PTHR16124:SF3">
    <property type="entry name" value="MIS18-BINDING PROTEIN 1"/>
    <property type="match status" value="1"/>
</dbReference>
<dbReference type="Pfam" id="PF09133">
    <property type="entry name" value="SANTA"/>
    <property type="match status" value="1"/>
</dbReference>
<dbReference type="SMART" id="SM00717">
    <property type="entry name" value="SANT"/>
    <property type="match status" value="1"/>
</dbReference>
<dbReference type="SUPFAM" id="SSF46689">
    <property type="entry name" value="Homeodomain-like"/>
    <property type="match status" value="1"/>
</dbReference>
<dbReference type="PROSITE" id="PS51293">
    <property type="entry name" value="SANT"/>
    <property type="match status" value="1"/>
</dbReference>
<keyword id="KW-0002">3D-structure</keyword>
<keyword id="KW-0025">Alternative splicing</keyword>
<keyword id="KW-0131">Cell cycle</keyword>
<keyword id="KW-0132">Cell division</keyword>
<keyword id="KW-0137">Centromere</keyword>
<keyword id="KW-0158">Chromosome</keyword>
<keyword id="KW-0238">DNA-binding</keyword>
<keyword id="KW-1017">Isopeptide bond</keyword>
<keyword id="KW-0498">Mitosis</keyword>
<keyword id="KW-0539">Nucleus</keyword>
<keyword id="KW-0597">Phosphoprotein</keyword>
<keyword id="KW-1267">Proteomics identification</keyword>
<keyword id="KW-1185">Reference proteome</keyword>
<keyword id="KW-0832">Ubl conjugation</keyword>
<accession>Q6P0N0</accession>
<accession>D3DSA7</accession>
<accession>Q86V14</accession>
<accession>Q96PY4</accession>
<accession>Q9NUR5</accession>
<accession>Q9Y4X9</accession>
<evidence type="ECO:0000250" key="1">
    <source>
        <dbReference type="UniProtKB" id="Q80WQ8"/>
    </source>
</evidence>
<evidence type="ECO:0000255" key="2">
    <source>
        <dbReference type="PROSITE-ProRule" id="PRU00624"/>
    </source>
</evidence>
<evidence type="ECO:0000256" key="3">
    <source>
        <dbReference type="SAM" id="MobiDB-lite"/>
    </source>
</evidence>
<evidence type="ECO:0000269" key="4">
    <source>
    </source>
</evidence>
<evidence type="ECO:0000269" key="5">
    <source>
    </source>
</evidence>
<evidence type="ECO:0000269" key="6">
    <source>
    </source>
</evidence>
<evidence type="ECO:0000269" key="7">
    <source>
    </source>
</evidence>
<evidence type="ECO:0000303" key="8">
    <source>
    </source>
</evidence>
<evidence type="ECO:0000303" key="9">
    <source>
    </source>
</evidence>
<evidence type="ECO:0000305" key="10"/>
<evidence type="ECO:0007744" key="11">
    <source>
    </source>
</evidence>
<evidence type="ECO:0007744" key="12">
    <source>
    </source>
</evidence>
<evidence type="ECO:0007744" key="13">
    <source>
    </source>
</evidence>
<evidence type="ECO:0007744" key="14">
    <source>
    </source>
</evidence>
<evidence type="ECO:0007744" key="15">
    <source>
    </source>
</evidence>
<evidence type="ECO:0007744" key="16">
    <source>
    </source>
</evidence>
<evidence type="ECO:0007744" key="17">
    <source>
    </source>
</evidence>
<evidence type="ECO:0007829" key="18">
    <source>
        <dbReference type="PDB" id="1WGX"/>
    </source>
</evidence>
<evidence type="ECO:0007829" key="19">
    <source>
        <dbReference type="PDB" id="8S31"/>
    </source>
</evidence>
<comment type="function">
    <text evidence="5 6">Required for recruitment of CENPA to centromeres and normal chromosome segregation during mitosis.</text>
</comment>
<comment type="subunit">
    <text evidence="1 4 5 7">Interacts with SP1 (PubMed:10976766). Interacts with MIS18A. Identified in a complex containing MIS18A, OIP5/MIS18B, MIS18BP1, RBBP7 and RBBP4 (PubMed:17199038). Interacts with KAT7/HBO1 (PubMed:27270040). Interacts (via N-terminus) with FLNA (via N-terminus) (By similarity).</text>
</comment>
<comment type="interaction">
    <interactant intactId="EBI-9870821">
        <id>Q6P0N0</id>
    </interactant>
    <interactant intactId="EBI-536879">
        <id>O43482</id>
        <label>OIP5</label>
    </interactant>
    <organismsDiffer>false</organismsDiffer>
    <experiments>6</experiments>
</comment>
<comment type="subcellular location">
    <subcellularLocation>
        <location evidence="5">Nucleus</location>
    </subcellularLocation>
    <subcellularLocation>
        <location evidence="5">Chromosome</location>
        <location evidence="5">Centromere</location>
    </subcellularLocation>
    <text evidence="5">Associated with centromeres in interphase cells, from late anaphase to the G1 phase. Not detected on centromeres during earlier phases of mitosis. Associated with chromatin.</text>
</comment>
<comment type="alternative products">
    <event type="alternative splicing"/>
    <isoform>
        <id>Q6P0N0-1</id>
        <name>1</name>
        <sequence type="displayed"/>
    </isoform>
    <isoform>
        <id>Q6P0N0-2</id>
        <name>2</name>
        <sequence type="described" ref="VSP_014105"/>
    </isoform>
</comment>
<comment type="sequence caution" evidence="10">
    <conflict type="frameshift">
        <sequence resource="EMBL" id="AK002048"/>
    </conflict>
</comment>
<comment type="sequence caution" evidence="10">
    <conflict type="frameshift">
        <sequence resource="EMBL-CDS" id="BAB67796"/>
    </conflict>
</comment>
<organism>
    <name type="scientific">Homo sapiens</name>
    <name type="common">Human</name>
    <dbReference type="NCBI Taxonomy" id="9606"/>
    <lineage>
        <taxon>Eukaryota</taxon>
        <taxon>Metazoa</taxon>
        <taxon>Chordata</taxon>
        <taxon>Craniata</taxon>
        <taxon>Vertebrata</taxon>
        <taxon>Euteleostomi</taxon>
        <taxon>Mammalia</taxon>
        <taxon>Eutheria</taxon>
        <taxon>Euarchontoglires</taxon>
        <taxon>Primates</taxon>
        <taxon>Haplorrhini</taxon>
        <taxon>Catarrhini</taxon>
        <taxon>Hominidae</taxon>
        <taxon>Homo</taxon>
    </lineage>
</organism>
<name>M18BP_HUMAN</name>
<protein>
    <recommendedName>
        <fullName>Mis18-binding protein 1</fullName>
    </recommendedName>
    <alternativeName>
        <fullName evidence="9">Kinetochore-associated protein KNL-2 homolog</fullName>
        <shortName evidence="9">HsKNL-2</shortName>
    </alternativeName>
    <alternativeName>
        <fullName>P243</fullName>
    </alternativeName>
</protein>
<gene>
    <name type="primary">MIS18BP1</name>
    <name type="synonym">C14orf106</name>
    <name type="synonym">KIAA1903</name>
    <name type="synonym">KNL2</name>
    <name type="synonym">M18BP1</name>
</gene>
<sequence length="1132" mass="129085">MIATPLKHSRIYLPPEASSQRRNLPMDAIFFDSIPSGTLTPVKDLVKYQNSSLKLNDHKKNQFLKMTTFNNKNIFQSTMLTEATTSNSSLDISAIKPNKDGLKNKANYESPGKIFLRMKEKVLRDKQEQPSRNSSLLEPQKSGNNETFTPNRVEKKKLQHTYLCEEKENNKSFQSDDSSLRASVQGVPLESSNNDIFLPVKQKIQCQQEKKAPLHNLTYELPTLNQEQENFLAVEARNKTLTRAQLAKQIFHSKESIVATTKSKKDTFVLESVDSADEQFQNTNAETLSTNCIPIKNGSLLMVSDSERTTEGTSQQKVKEGNGKTVPGETGLPGSMKDTCKIVLATPRLHITIPRRSKRNISKLSPPRIFQTVTNGLKKNQVVQLQEWMIKSINNNTAICVEGKLIDVTNIYWHSNVIIERIEHNKLRTISGNVYILKGMIDQISMKEAGYPNYLIRKFMFGFPENWKEHIDNFLEQLRAGEKNREKTKQKQKTGRSVRDIRKSMKNDARENQTDTAQRATTTYDFDCDNLELKSNKHSESPGATELNMCHSNCQNKPTLRFPDDQVNNTIQNGGGDDLSNQELIGKKEYKMSSKKLKIGERTNERIIKSQKQETTEELDVSIDILTSREQFFSDEERKYMAINQKKAYILVTPLKSRKVIEQRCMRYNLSAGTIKAVTDFVIPECQKKSPISKSMGTLENTFEGHKSKNKEDCDERDLLTVNRKIKISNLEKEQMLTSDFKKNTRLLPKLKKIENQVAMSFYKHQSSPDLSSEESETEKEIKRKAEVKKTKAGNTKEAVVHLRKSTRNTSNIPVILEPETEESENEFYIKQKKARPSVKETLQKSGVRKEFPITEAVGSDKTNRHPLECLPGLIQDKEWNEKELQKLHCAFASLPKHKPGFWSEVAAAVGSRSPEECQRKYMENPRGKGSQKHVTKKKPANSKGQNGKRGDADQKQTIKITAKVGTLKRKQQMREFLEQLPKDDHDDFFSTTPLQHQRILLPSFQDSEDDDDILPNMDKNPTTPSSVIFPLVKTPQCQHVSPGMLGSINRNDCDKYVFRMQKYHKSNGGIVWGNIKKKLVETDFSTPTPRRKTPFNTDLGENSGIGKLFTNAVESLDEEEKDYYFSNSDSA</sequence>
<proteinExistence type="evidence at protein level"/>
<reference key="1">
    <citation type="journal article" date="2001" name="DNA Res.">
        <title>Prediction of the coding sequences of unidentified human genes. XXI. The complete sequences of 60 new cDNA clones from brain which code for large proteins.</title>
        <authorList>
            <person name="Nagase T."/>
            <person name="Kikuno R."/>
            <person name="Ohara O."/>
        </authorList>
    </citation>
    <scope>NUCLEOTIDE SEQUENCE [LARGE SCALE MRNA] (ISOFORM 1)</scope>
    <source>
        <tissue>Brain</tissue>
    </source>
</reference>
<reference key="2">
    <citation type="journal article" date="2004" name="Nat. Genet.">
        <title>Complete sequencing and characterization of 21,243 full-length human cDNAs.</title>
        <authorList>
            <person name="Ota T."/>
            <person name="Suzuki Y."/>
            <person name="Nishikawa T."/>
            <person name="Otsuki T."/>
            <person name="Sugiyama T."/>
            <person name="Irie R."/>
            <person name="Wakamatsu A."/>
            <person name="Hayashi K."/>
            <person name="Sato H."/>
            <person name="Nagai K."/>
            <person name="Kimura K."/>
            <person name="Makita H."/>
            <person name="Sekine M."/>
            <person name="Obayashi M."/>
            <person name="Nishi T."/>
            <person name="Shibahara T."/>
            <person name="Tanaka T."/>
            <person name="Ishii S."/>
            <person name="Yamamoto J."/>
            <person name="Saito K."/>
            <person name="Kawai Y."/>
            <person name="Isono Y."/>
            <person name="Nakamura Y."/>
            <person name="Nagahari K."/>
            <person name="Murakami K."/>
            <person name="Yasuda T."/>
            <person name="Iwayanagi T."/>
            <person name="Wagatsuma M."/>
            <person name="Shiratori A."/>
            <person name="Sudo H."/>
            <person name="Hosoiri T."/>
            <person name="Kaku Y."/>
            <person name="Kodaira H."/>
            <person name="Kondo H."/>
            <person name="Sugawara M."/>
            <person name="Takahashi M."/>
            <person name="Kanda K."/>
            <person name="Yokoi T."/>
            <person name="Furuya T."/>
            <person name="Kikkawa E."/>
            <person name="Omura Y."/>
            <person name="Abe K."/>
            <person name="Kamihara K."/>
            <person name="Katsuta N."/>
            <person name="Sato K."/>
            <person name="Tanikawa M."/>
            <person name="Yamazaki M."/>
            <person name="Ninomiya K."/>
            <person name="Ishibashi T."/>
            <person name="Yamashita H."/>
            <person name="Murakawa K."/>
            <person name="Fujimori K."/>
            <person name="Tanai H."/>
            <person name="Kimata M."/>
            <person name="Watanabe M."/>
            <person name="Hiraoka S."/>
            <person name="Chiba Y."/>
            <person name="Ishida S."/>
            <person name="Ono Y."/>
            <person name="Takiguchi S."/>
            <person name="Watanabe S."/>
            <person name="Yosida M."/>
            <person name="Hotuta T."/>
            <person name="Kusano J."/>
            <person name="Kanehori K."/>
            <person name="Takahashi-Fujii A."/>
            <person name="Hara H."/>
            <person name="Tanase T.-O."/>
            <person name="Nomura Y."/>
            <person name="Togiya S."/>
            <person name="Komai F."/>
            <person name="Hara R."/>
            <person name="Takeuchi K."/>
            <person name="Arita M."/>
            <person name="Imose N."/>
            <person name="Musashino K."/>
            <person name="Yuuki H."/>
            <person name="Oshima A."/>
            <person name="Sasaki N."/>
            <person name="Aotsuka S."/>
            <person name="Yoshikawa Y."/>
            <person name="Matsunawa H."/>
            <person name="Ichihara T."/>
            <person name="Shiohata N."/>
            <person name="Sano S."/>
            <person name="Moriya S."/>
            <person name="Momiyama H."/>
            <person name="Satoh N."/>
            <person name="Takami S."/>
            <person name="Terashima Y."/>
            <person name="Suzuki O."/>
            <person name="Nakagawa S."/>
            <person name="Senoh A."/>
            <person name="Mizoguchi H."/>
            <person name="Goto Y."/>
            <person name="Shimizu F."/>
            <person name="Wakebe H."/>
            <person name="Hishigaki H."/>
            <person name="Watanabe T."/>
            <person name="Sugiyama A."/>
            <person name="Takemoto M."/>
            <person name="Kawakami B."/>
            <person name="Yamazaki M."/>
            <person name="Watanabe K."/>
            <person name="Kumagai A."/>
            <person name="Itakura S."/>
            <person name="Fukuzumi Y."/>
            <person name="Fujimori Y."/>
            <person name="Komiyama M."/>
            <person name="Tashiro H."/>
            <person name="Tanigami A."/>
            <person name="Fujiwara T."/>
            <person name="Ono T."/>
            <person name="Yamada K."/>
            <person name="Fujii Y."/>
            <person name="Ozaki K."/>
            <person name="Hirao M."/>
            <person name="Ohmori Y."/>
            <person name="Kawabata A."/>
            <person name="Hikiji T."/>
            <person name="Kobatake N."/>
            <person name="Inagaki H."/>
            <person name="Ikema Y."/>
            <person name="Okamoto S."/>
            <person name="Okitani R."/>
            <person name="Kawakami T."/>
            <person name="Noguchi S."/>
            <person name="Itoh T."/>
            <person name="Shigeta K."/>
            <person name="Senba T."/>
            <person name="Matsumura K."/>
            <person name="Nakajima Y."/>
            <person name="Mizuno T."/>
            <person name="Morinaga M."/>
            <person name="Sasaki M."/>
            <person name="Togashi T."/>
            <person name="Oyama M."/>
            <person name="Hata H."/>
            <person name="Watanabe M."/>
            <person name="Komatsu T."/>
            <person name="Mizushima-Sugano J."/>
            <person name="Satoh T."/>
            <person name="Shirai Y."/>
            <person name="Takahashi Y."/>
            <person name="Nakagawa K."/>
            <person name="Okumura K."/>
            <person name="Nagase T."/>
            <person name="Nomura N."/>
            <person name="Kikuchi H."/>
            <person name="Masuho Y."/>
            <person name="Yamashita R."/>
            <person name="Nakai K."/>
            <person name="Yada T."/>
            <person name="Nakamura Y."/>
            <person name="Ohara O."/>
            <person name="Isogai T."/>
            <person name="Sugano S."/>
        </authorList>
    </citation>
    <scope>NUCLEOTIDE SEQUENCE [LARGE SCALE MRNA] (ISOFORM 2)</scope>
    <source>
        <tissue>Placenta</tissue>
    </source>
</reference>
<reference key="3">
    <citation type="journal article" date="2003" name="Nature">
        <title>The DNA sequence and analysis of human chromosome 14.</title>
        <authorList>
            <person name="Heilig R."/>
            <person name="Eckenberg R."/>
            <person name="Petit J.-L."/>
            <person name="Fonknechten N."/>
            <person name="Da Silva C."/>
            <person name="Cattolico L."/>
            <person name="Levy M."/>
            <person name="Barbe V."/>
            <person name="De Berardinis V."/>
            <person name="Ureta-Vidal A."/>
            <person name="Pelletier E."/>
            <person name="Vico V."/>
            <person name="Anthouard V."/>
            <person name="Rowen L."/>
            <person name="Madan A."/>
            <person name="Qin S."/>
            <person name="Sun H."/>
            <person name="Du H."/>
            <person name="Pepin K."/>
            <person name="Artiguenave F."/>
            <person name="Robert C."/>
            <person name="Cruaud C."/>
            <person name="Bruels T."/>
            <person name="Jaillon O."/>
            <person name="Friedlander L."/>
            <person name="Samson G."/>
            <person name="Brottier P."/>
            <person name="Cure S."/>
            <person name="Segurens B."/>
            <person name="Aniere F."/>
            <person name="Samain S."/>
            <person name="Crespeau H."/>
            <person name="Abbasi N."/>
            <person name="Aiach N."/>
            <person name="Boscus D."/>
            <person name="Dickhoff R."/>
            <person name="Dors M."/>
            <person name="Dubois I."/>
            <person name="Friedman C."/>
            <person name="Gouyvenoux M."/>
            <person name="James R."/>
            <person name="Madan A."/>
            <person name="Mairey-Estrada B."/>
            <person name="Mangenot S."/>
            <person name="Martins N."/>
            <person name="Menard M."/>
            <person name="Oztas S."/>
            <person name="Ratcliffe A."/>
            <person name="Shaffer T."/>
            <person name="Trask B."/>
            <person name="Vacherie B."/>
            <person name="Bellemere C."/>
            <person name="Belser C."/>
            <person name="Besnard-Gonnet M."/>
            <person name="Bartol-Mavel D."/>
            <person name="Boutard M."/>
            <person name="Briez-Silla S."/>
            <person name="Combette S."/>
            <person name="Dufosse-Laurent V."/>
            <person name="Ferron C."/>
            <person name="Lechaplais C."/>
            <person name="Louesse C."/>
            <person name="Muselet D."/>
            <person name="Magdelenat G."/>
            <person name="Pateau E."/>
            <person name="Petit E."/>
            <person name="Sirvain-Trukniewicz P."/>
            <person name="Trybou A."/>
            <person name="Vega-Czarny N."/>
            <person name="Bataille E."/>
            <person name="Bluet E."/>
            <person name="Bordelais I."/>
            <person name="Dubois M."/>
            <person name="Dumont C."/>
            <person name="Guerin T."/>
            <person name="Haffray S."/>
            <person name="Hammadi R."/>
            <person name="Muanga J."/>
            <person name="Pellouin V."/>
            <person name="Robert D."/>
            <person name="Wunderle E."/>
            <person name="Gauguet G."/>
            <person name="Roy A."/>
            <person name="Sainte-Marthe L."/>
            <person name="Verdier J."/>
            <person name="Verdier-Discala C."/>
            <person name="Hillier L.W."/>
            <person name="Fulton L."/>
            <person name="McPherson J."/>
            <person name="Matsuda F."/>
            <person name="Wilson R."/>
            <person name="Scarpelli C."/>
            <person name="Gyapay G."/>
            <person name="Wincker P."/>
            <person name="Saurin W."/>
            <person name="Quetier F."/>
            <person name="Waterston R."/>
            <person name="Hood L."/>
            <person name="Weissenbach J."/>
        </authorList>
    </citation>
    <scope>NUCLEOTIDE SEQUENCE [LARGE SCALE GENOMIC DNA]</scope>
</reference>
<reference key="4">
    <citation type="submission" date="2005-09" db="EMBL/GenBank/DDBJ databases">
        <authorList>
            <person name="Mural R.J."/>
            <person name="Istrail S."/>
            <person name="Sutton G.G."/>
            <person name="Florea L."/>
            <person name="Halpern A.L."/>
            <person name="Mobarry C.M."/>
            <person name="Lippert R."/>
            <person name="Walenz B."/>
            <person name="Shatkay H."/>
            <person name="Dew I."/>
            <person name="Miller J.R."/>
            <person name="Flanigan M.J."/>
            <person name="Edwards N.J."/>
            <person name="Bolanos R."/>
            <person name="Fasulo D."/>
            <person name="Halldorsson B.V."/>
            <person name="Hannenhalli S."/>
            <person name="Turner R."/>
            <person name="Yooseph S."/>
            <person name="Lu F."/>
            <person name="Nusskern D.R."/>
            <person name="Shue B.C."/>
            <person name="Zheng X.H."/>
            <person name="Zhong F."/>
            <person name="Delcher A.L."/>
            <person name="Huson D.H."/>
            <person name="Kravitz S.A."/>
            <person name="Mouchard L."/>
            <person name="Reinert K."/>
            <person name="Remington K.A."/>
            <person name="Clark A.G."/>
            <person name="Waterman M.S."/>
            <person name="Eichler E.E."/>
            <person name="Adams M.D."/>
            <person name="Hunkapiller M.W."/>
            <person name="Myers E.W."/>
            <person name="Venter J.C."/>
        </authorList>
    </citation>
    <scope>NUCLEOTIDE SEQUENCE [LARGE SCALE GENOMIC DNA]</scope>
</reference>
<reference key="5">
    <citation type="journal article" date="2004" name="Genome Res.">
        <title>The status, quality, and expansion of the NIH full-length cDNA project: the Mammalian Gene Collection (MGC).</title>
        <authorList>
            <consortium name="The MGC Project Team"/>
        </authorList>
    </citation>
    <scope>NUCLEOTIDE SEQUENCE [LARGE SCALE MRNA] (ISOFORM 1)</scope>
    <source>
        <tissue>Testis</tissue>
        <tissue>Uterus</tissue>
    </source>
</reference>
<reference key="6">
    <citation type="journal article" date="2000" name="Mol. Cell. Biochem.">
        <title>A set of proteins interacting with transcription factor Sp1 identified in a two-hybrid screening.</title>
        <authorList>
            <person name="Gunther M."/>
            <person name="Laithier M."/>
            <person name="Brison O."/>
        </authorList>
    </citation>
    <scope>NUCLEOTIDE SEQUENCE [MRNA] OF 523-760</scope>
    <scope>INTERACTION WITH SP1</scope>
    <source>
        <tissue>Colon carcinoma</tissue>
    </source>
</reference>
<reference key="7">
    <citation type="journal article" date="2007" name="Dev. Cell">
        <title>Priming of centromere for CENP-A recruitment by human hMis18alpha, hMis18beta, and M18BP1.</title>
        <authorList>
            <person name="Fujita Y."/>
            <person name="Hayashi T."/>
            <person name="Kiyomitsu T."/>
            <person name="Toyoda Y."/>
            <person name="Kokubu A."/>
            <person name="Obuse C."/>
            <person name="Yanagida M."/>
        </authorList>
    </citation>
    <scope>FUNCTION</scope>
    <scope>SUBCELLULAR LOCATION</scope>
    <scope>IDENTIFICATION BY MASS SPECTROMETRY</scope>
    <scope>INTERACTION WITH MIS18A</scope>
    <scope>IDENTIFICATION IN A COMPLEX CONTAINING MIS18A; OIP5; MIS18BP1; RBBP7 AND RBBP4</scope>
</reference>
<reference key="8">
    <citation type="journal article" date="2007" name="J. Cell Biol.">
        <title>Functional genomics identifies a Myb domain-containing protein family required for assembly of CENP-A chromatin.</title>
        <authorList>
            <person name="Maddox P.S."/>
            <person name="Hyndman F."/>
            <person name="Monen J."/>
            <person name="Oegema K."/>
            <person name="Desai A."/>
        </authorList>
    </citation>
    <scope>FUNCTION</scope>
    <scope>SUBCELLULAR LOCATION</scope>
</reference>
<reference key="9">
    <citation type="journal article" date="2008" name="Proc. Natl. Acad. Sci. U.S.A.">
        <title>A quantitative atlas of mitotic phosphorylation.</title>
        <authorList>
            <person name="Dephoure N."/>
            <person name="Zhou C."/>
            <person name="Villen J."/>
            <person name="Beausoleil S.A."/>
            <person name="Bakalarski C.E."/>
            <person name="Elledge S.J."/>
            <person name="Gygi S.P."/>
        </authorList>
    </citation>
    <scope>PHOSPHORYLATION [LARGE SCALE ANALYSIS] AT SER-110; THR-653; THR-821; SER-824; SER-1008; SER-1086; THR-1087; THR-1089 AND SER-1104</scope>
    <scope>IDENTIFICATION BY MASS SPECTROMETRY [LARGE SCALE ANALYSIS]</scope>
    <source>
        <tissue>Cervix carcinoma</tissue>
    </source>
</reference>
<reference key="10">
    <citation type="journal article" date="2009" name="Anal. Chem.">
        <title>Lys-N and trypsin cover complementary parts of the phosphoproteome in a refined SCX-based approach.</title>
        <authorList>
            <person name="Gauci S."/>
            <person name="Helbig A.O."/>
            <person name="Slijper M."/>
            <person name="Krijgsveld J."/>
            <person name="Heck A.J."/>
            <person name="Mohammed S."/>
        </authorList>
    </citation>
    <scope>IDENTIFICATION BY MASS SPECTROMETRY [LARGE SCALE ANALYSIS]</scope>
</reference>
<reference key="11">
    <citation type="journal article" date="2009" name="Sci. Signal.">
        <title>Quantitative phosphoproteomic analysis of T cell receptor signaling reveals system-wide modulation of protein-protein interactions.</title>
        <authorList>
            <person name="Mayya V."/>
            <person name="Lundgren D.H."/>
            <person name="Hwang S.-I."/>
            <person name="Rezaul K."/>
            <person name="Wu L."/>
            <person name="Eng J.K."/>
            <person name="Rodionov V."/>
            <person name="Han D.K."/>
        </authorList>
    </citation>
    <scope>PHOSPHORYLATION [LARGE SCALE ANALYSIS] AT SER-1008 AND SER-1104</scope>
    <scope>IDENTIFICATION BY MASS SPECTROMETRY [LARGE SCALE ANALYSIS]</scope>
    <source>
        <tissue>Leukemic T-cell</tissue>
    </source>
</reference>
<reference key="12">
    <citation type="journal article" date="2010" name="Sci. Signal.">
        <title>Quantitative phosphoproteomics reveals widespread full phosphorylation site occupancy during mitosis.</title>
        <authorList>
            <person name="Olsen J.V."/>
            <person name="Vermeulen M."/>
            <person name="Santamaria A."/>
            <person name="Kumar C."/>
            <person name="Miller M.L."/>
            <person name="Jensen L.J."/>
            <person name="Gnad F."/>
            <person name="Cox J."/>
            <person name="Jensen T.S."/>
            <person name="Nigg E.A."/>
            <person name="Brunak S."/>
            <person name="Mann M."/>
        </authorList>
    </citation>
    <scope>PHOSPHORYLATION [LARGE SCALE ANALYSIS] AT THR-653; SER-860; SER-1008; SER-1104 AND SER-1116</scope>
    <scope>IDENTIFICATION BY MASS SPECTROMETRY [LARGE SCALE ANALYSIS]</scope>
    <source>
        <tissue>Cervix carcinoma</tissue>
    </source>
</reference>
<reference key="13">
    <citation type="journal article" date="2011" name="Sci. Signal.">
        <title>System-wide temporal characterization of the proteome and phosphoproteome of human embryonic stem cell differentiation.</title>
        <authorList>
            <person name="Rigbolt K.T."/>
            <person name="Prokhorova T.A."/>
            <person name="Akimov V."/>
            <person name="Henningsen J."/>
            <person name="Johansen P.T."/>
            <person name="Kratchmarova I."/>
            <person name="Kassem M."/>
            <person name="Mann M."/>
            <person name="Olsen J.V."/>
            <person name="Blagoev B."/>
        </authorList>
    </citation>
    <scope>PHOSPHORYLATION [LARGE SCALE ANALYSIS] AT SER-135; SER-172; SER-299; THR-653; SER-772; SER-773; SER-1008; SER-1104 AND SER-1116</scope>
    <scope>IDENTIFICATION BY MASS SPECTROMETRY [LARGE SCALE ANALYSIS]</scope>
</reference>
<reference key="14">
    <citation type="journal article" date="2013" name="J. Proteome Res.">
        <title>Toward a comprehensive characterization of a human cancer cell phosphoproteome.</title>
        <authorList>
            <person name="Zhou H."/>
            <person name="Di Palma S."/>
            <person name="Preisinger C."/>
            <person name="Peng M."/>
            <person name="Polat A.N."/>
            <person name="Heck A.J."/>
            <person name="Mohammed S."/>
        </authorList>
    </citation>
    <scope>PHOSPHORYLATION [LARGE SCALE ANALYSIS] AT SER-9; SER-131; SER-135; SER-192; SER-299; SER-365; THR-653; SER-860; SER-1104 AND SER-1116</scope>
    <scope>IDENTIFICATION BY MASS SPECTROMETRY [LARGE SCALE ANALYSIS]</scope>
    <source>
        <tissue>Cervix carcinoma</tissue>
        <tissue>Erythroleukemia</tissue>
    </source>
</reference>
<reference key="15">
    <citation type="journal article" date="2015" name="Mol. Cell. Proteomics">
        <title>System-wide analysis of SUMOylation dynamics in response to replication stress reveals novel small ubiquitin-like modified target proteins and acceptor lysines relevant for genome stability.</title>
        <authorList>
            <person name="Xiao Z."/>
            <person name="Chang J.G."/>
            <person name="Hendriks I.A."/>
            <person name="Sigurdsson J.O."/>
            <person name="Olsen J.V."/>
            <person name="Vertegaal A.C."/>
        </authorList>
    </citation>
    <scope>SUMOYLATION [LARGE SCALE ANALYSIS] AT LYS-639; LYS-742 AND LYS-899</scope>
    <scope>IDENTIFICATION BY MASS SPECTROMETRY [LARGE SCALE ANALYSIS]</scope>
</reference>
<reference key="16">
    <citation type="journal article" date="2016" name="Dev. Cell">
        <title>KAT7/HBO1/MYST2 regulates CENP-A chromatin assembly by antagonizing Suv39h1-mediated centromere inactivation.</title>
        <authorList>
            <person name="Ohzeki J."/>
            <person name="Shono N."/>
            <person name="Otake K."/>
            <person name="Martins N.M."/>
            <person name="Kugou K."/>
            <person name="Kimura H."/>
            <person name="Nagase T."/>
            <person name="Larionov V."/>
            <person name="Earnshaw W.C."/>
            <person name="Masumoto H."/>
        </authorList>
    </citation>
    <scope>INTERACTION WITH KAT7</scope>
</reference>
<reference key="17">
    <citation type="journal article" date="2017" name="Nat. Struct. Mol. Biol.">
        <title>Site-specific mapping of the human SUMO proteome reveals co-modification with phosphorylation.</title>
        <authorList>
            <person name="Hendriks I.A."/>
            <person name="Lyon D."/>
            <person name="Young C."/>
            <person name="Jensen L.J."/>
            <person name="Vertegaal A.C."/>
            <person name="Nielsen M.L."/>
        </authorList>
    </citation>
    <scope>SUMOYLATION [LARGE SCALE ANALYSIS] AT LYS-7; LYS-65; LYS-211; LYS-262; LYS-534; LYS-612; LYS-639; LYS-647; LYS-727; LYS-742; LYS-840; LYS-899; LYS-956; LYS-964; LYS-983 AND LYS-1079</scope>
    <scope>IDENTIFICATION BY MASS SPECTROMETRY [LARGE SCALE ANALYSIS]</scope>
</reference>
<reference key="18">
    <citation type="submission" date="2004-11" db="PDB data bank">
        <title>Solution structure of RSGI RUH-022, a Myb DNA-binding domain in human cDNA.</title>
        <authorList>
            <consortium name="RIKEN structural genomics initiative (RSGI)"/>
        </authorList>
    </citation>
    <scope>STRUCTURE BY NMR OF 877-936</scope>
</reference>